<sequence>MTLRPLHDKVILKREEVETRSAGGIVLTGSAATKSTRGKVIAVGTGRLLENGSVQALAVKVGDVVIFNEGYGVKSEKIDGEEVLILSENDILAIVE</sequence>
<dbReference type="EMBL" id="U55016">
    <property type="protein sequence ID" value="AAB51436.1"/>
    <property type="molecule type" value="Genomic_DNA"/>
</dbReference>
<dbReference type="RefSeq" id="WP_005597793.1">
    <property type="nucleotide sequence ID" value="NZ_UIFY01000002.1"/>
</dbReference>
<dbReference type="SMR" id="P94165"/>
<dbReference type="OrthoDB" id="9806791at2"/>
<dbReference type="GO" id="GO:0005737">
    <property type="term" value="C:cytoplasm"/>
    <property type="evidence" value="ECO:0007669"/>
    <property type="project" value="UniProtKB-SubCell"/>
</dbReference>
<dbReference type="GO" id="GO:0005524">
    <property type="term" value="F:ATP binding"/>
    <property type="evidence" value="ECO:0007669"/>
    <property type="project" value="InterPro"/>
</dbReference>
<dbReference type="GO" id="GO:0046872">
    <property type="term" value="F:metal ion binding"/>
    <property type="evidence" value="ECO:0007669"/>
    <property type="project" value="TreeGrafter"/>
</dbReference>
<dbReference type="GO" id="GO:0044183">
    <property type="term" value="F:protein folding chaperone"/>
    <property type="evidence" value="ECO:0007669"/>
    <property type="project" value="InterPro"/>
</dbReference>
<dbReference type="GO" id="GO:0051087">
    <property type="term" value="F:protein-folding chaperone binding"/>
    <property type="evidence" value="ECO:0007669"/>
    <property type="project" value="TreeGrafter"/>
</dbReference>
<dbReference type="GO" id="GO:0051082">
    <property type="term" value="F:unfolded protein binding"/>
    <property type="evidence" value="ECO:0007669"/>
    <property type="project" value="TreeGrafter"/>
</dbReference>
<dbReference type="GO" id="GO:0051085">
    <property type="term" value="P:chaperone cofactor-dependent protein refolding"/>
    <property type="evidence" value="ECO:0007669"/>
    <property type="project" value="TreeGrafter"/>
</dbReference>
<dbReference type="CDD" id="cd00320">
    <property type="entry name" value="cpn10"/>
    <property type="match status" value="1"/>
</dbReference>
<dbReference type="FunFam" id="2.30.33.40:FF:000001">
    <property type="entry name" value="10 kDa chaperonin"/>
    <property type="match status" value="1"/>
</dbReference>
<dbReference type="Gene3D" id="2.30.33.40">
    <property type="entry name" value="GroES chaperonin"/>
    <property type="match status" value="1"/>
</dbReference>
<dbReference type="HAMAP" id="MF_00580">
    <property type="entry name" value="CH10"/>
    <property type="match status" value="1"/>
</dbReference>
<dbReference type="InterPro" id="IPR020818">
    <property type="entry name" value="Chaperonin_GroES"/>
</dbReference>
<dbReference type="InterPro" id="IPR037124">
    <property type="entry name" value="Chaperonin_GroES_sf"/>
</dbReference>
<dbReference type="InterPro" id="IPR018369">
    <property type="entry name" value="Chaprnonin_Cpn10_CS"/>
</dbReference>
<dbReference type="InterPro" id="IPR011032">
    <property type="entry name" value="GroES-like_sf"/>
</dbReference>
<dbReference type="NCBIfam" id="NF001526">
    <property type="entry name" value="PRK00364.1-1"/>
    <property type="match status" value="1"/>
</dbReference>
<dbReference type="PANTHER" id="PTHR10772">
    <property type="entry name" value="10 KDA HEAT SHOCK PROTEIN"/>
    <property type="match status" value="1"/>
</dbReference>
<dbReference type="PANTHER" id="PTHR10772:SF58">
    <property type="entry name" value="CO-CHAPERONIN GROES"/>
    <property type="match status" value="1"/>
</dbReference>
<dbReference type="Pfam" id="PF00166">
    <property type="entry name" value="Cpn10"/>
    <property type="match status" value="1"/>
</dbReference>
<dbReference type="PRINTS" id="PR00297">
    <property type="entry name" value="CHAPERONIN10"/>
</dbReference>
<dbReference type="SMART" id="SM00883">
    <property type="entry name" value="Cpn10"/>
    <property type="match status" value="1"/>
</dbReference>
<dbReference type="SUPFAM" id="SSF50129">
    <property type="entry name" value="GroES-like"/>
    <property type="match status" value="1"/>
</dbReference>
<dbReference type="PROSITE" id="PS00681">
    <property type="entry name" value="CHAPERONINS_CPN10"/>
    <property type="match status" value="1"/>
</dbReference>
<protein>
    <recommendedName>
        <fullName evidence="1">Co-chaperonin GroES</fullName>
    </recommendedName>
    <alternativeName>
        <fullName evidence="1">10 kDa chaperonin</fullName>
    </alternativeName>
    <alternativeName>
        <fullName evidence="1">Chaperonin-10</fullName>
        <shortName evidence="1">Cpn10</shortName>
    </alternativeName>
</protein>
<keyword id="KW-0143">Chaperone</keyword>
<keyword id="KW-0963">Cytoplasm</keyword>
<feature type="chain" id="PRO_0000174680" description="Co-chaperonin GroES">
    <location>
        <begin position="1"/>
        <end position="96"/>
    </location>
</feature>
<proteinExistence type="inferred from homology"/>
<gene>
    <name evidence="1" type="primary">groES</name>
    <name evidence="1" type="synonym">groS</name>
    <name type="synonym">mopB</name>
</gene>
<name>CH10_ACTPL</name>
<organism>
    <name type="scientific">Actinobacillus pleuropneumoniae</name>
    <name type="common">Haemophilus pleuropneumoniae</name>
    <dbReference type="NCBI Taxonomy" id="715"/>
    <lineage>
        <taxon>Bacteria</taxon>
        <taxon>Pseudomonadati</taxon>
        <taxon>Pseudomonadota</taxon>
        <taxon>Gammaproteobacteria</taxon>
        <taxon>Pasteurellales</taxon>
        <taxon>Pasteurellaceae</taxon>
        <taxon>Actinobacillus</taxon>
    </lineage>
</organism>
<reference key="1">
    <citation type="journal article" date="1997" name="FEMS Microbiol. Lett.">
        <title>Cloning and characterization of the groE locus from Actinobacillus pleuropneumoniae.</title>
        <authorList>
            <person name="Vezina G."/>
            <person name="Sirois M."/>
            <person name="Clairoux N."/>
            <person name="Boissinot M."/>
        </authorList>
    </citation>
    <scope>NUCLEOTIDE SEQUENCE [GENOMIC DNA]</scope>
    <source>
        <strain>ATCC 27088 / DSM 13472 / CCM 5869 / S4074 / Serotype 1</strain>
    </source>
</reference>
<accession>P94165</accession>
<evidence type="ECO:0000255" key="1">
    <source>
        <dbReference type="HAMAP-Rule" id="MF_00580"/>
    </source>
</evidence>
<evidence type="ECO:0000305" key="2"/>
<comment type="function">
    <text evidence="1">Together with the chaperonin GroEL, plays an essential role in assisting protein folding. The GroEL-GroES system forms a nano-cage that allows encapsulation of the non-native substrate proteins and provides a physical environment optimized to promote and accelerate protein folding. GroES binds to the apical surface of the GroEL ring, thereby capping the opening of the GroEL channel.</text>
</comment>
<comment type="subunit">
    <text evidence="1">Heptamer of 7 subunits arranged in a ring. Interacts with the chaperonin GroEL.</text>
</comment>
<comment type="subcellular location">
    <subcellularLocation>
        <location evidence="1">Cytoplasm</location>
    </subcellularLocation>
</comment>
<comment type="similarity">
    <text evidence="1 2">Belongs to the GroES chaperonin family.</text>
</comment>